<dbReference type="EMBL" id="U18530">
    <property type="protein sequence ID" value="AAB64503.1"/>
    <property type="molecule type" value="Genomic_DNA"/>
</dbReference>
<dbReference type="EMBL" id="AY558377">
    <property type="protein sequence ID" value="AAS56703.1"/>
    <property type="molecule type" value="Genomic_DNA"/>
</dbReference>
<dbReference type="EMBL" id="BK006939">
    <property type="protein sequence ID" value="DAA07626.1"/>
    <property type="molecule type" value="Genomic_DNA"/>
</dbReference>
<dbReference type="PIR" id="S50433">
    <property type="entry name" value="S50433"/>
</dbReference>
<dbReference type="RefSeq" id="NP_010888.1">
    <property type="nucleotide sequence ID" value="NM_001178841.1"/>
</dbReference>
<dbReference type="PDB" id="1ZWZ">
    <property type="method" value="X-ray"/>
    <property type="resolution" value="1.90 A"/>
    <property type="chains" value="A/B=1-126"/>
</dbReference>
<dbReference type="PDB" id="2ALE">
    <property type="method" value="X-ray"/>
    <property type="resolution" value="1.80 A"/>
    <property type="chains" value="A=1-126"/>
</dbReference>
<dbReference type="PDB" id="3JCM">
    <property type="method" value="EM"/>
    <property type="resolution" value="3.80 A"/>
    <property type="chains" value="M=1-126"/>
</dbReference>
<dbReference type="PDB" id="4NUT">
    <property type="method" value="X-ray"/>
    <property type="resolution" value="1.55 A"/>
    <property type="chains" value="A=1-126"/>
</dbReference>
<dbReference type="PDB" id="5GAN">
    <property type="method" value="EM"/>
    <property type="resolution" value="3.60 A"/>
    <property type="chains" value="K=1-126"/>
</dbReference>
<dbReference type="PDB" id="5GAP">
    <property type="method" value="EM"/>
    <property type="resolution" value="3.60 A"/>
    <property type="chains" value="K=1-126"/>
</dbReference>
<dbReference type="PDB" id="5NRL">
    <property type="method" value="EM"/>
    <property type="resolution" value="7.20 A"/>
    <property type="chains" value="K=1-126"/>
</dbReference>
<dbReference type="PDB" id="5TZS">
    <property type="method" value="EM"/>
    <property type="resolution" value="5.10 A"/>
    <property type="chains" value="e/f=1-126"/>
</dbReference>
<dbReference type="PDB" id="5WLC">
    <property type="method" value="EM"/>
    <property type="resolution" value="3.80 A"/>
    <property type="chains" value="SE/SF=1-126"/>
</dbReference>
<dbReference type="PDB" id="5WYJ">
    <property type="method" value="EM"/>
    <property type="resolution" value="8.70 A"/>
    <property type="chains" value="3G/3H=1-126"/>
</dbReference>
<dbReference type="PDB" id="5WYK">
    <property type="method" value="EM"/>
    <property type="resolution" value="4.50 A"/>
    <property type="chains" value="3G/3H=1-126"/>
</dbReference>
<dbReference type="PDB" id="5ZWM">
    <property type="method" value="EM"/>
    <property type="resolution" value="3.40 A"/>
    <property type="chains" value="M=1-126"/>
</dbReference>
<dbReference type="PDB" id="5ZWO">
    <property type="method" value="EM"/>
    <property type="resolution" value="3.90 A"/>
    <property type="chains" value="M=1-126"/>
</dbReference>
<dbReference type="PDB" id="6KE6">
    <property type="method" value="EM"/>
    <property type="resolution" value="3.40 A"/>
    <property type="chains" value="3G/3H=1-126"/>
</dbReference>
<dbReference type="PDB" id="6LQP">
    <property type="method" value="EM"/>
    <property type="resolution" value="3.20 A"/>
    <property type="chains" value="3G/3H=1-126"/>
</dbReference>
<dbReference type="PDB" id="6LQQ">
    <property type="method" value="EM"/>
    <property type="resolution" value="4.10 A"/>
    <property type="chains" value="3G/3H=1-126"/>
</dbReference>
<dbReference type="PDB" id="6LQR">
    <property type="method" value="EM"/>
    <property type="resolution" value="8.60 A"/>
    <property type="chains" value="3G/3H=1-126"/>
</dbReference>
<dbReference type="PDB" id="6LQS">
    <property type="method" value="EM"/>
    <property type="resolution" value="3.80 A"/>
    <property type="chains" value="3G/3H=1-126"/>
</dbReference>
<dbReference type="PDB" id="6LQT">
    <property type="method" value="EM"/>
    <property type="resolution" value="4.90 A"/>
    <property type="chains" value="3G/3H=1-126"/>
</dbReference>
<dbReference type="PDB" id="6LQU">
    <property type="method" value="EM"/>
    <property type="resolution" value="3.70 A"/>
    <property type="chains" value="3G/3H=1-126"/>
</dbReference>
<dbReference type="PDB" id="6LQV">
    <property type="method" value="EM"/>
    <property type="resolution" value="4.80 A"/>
    <property type="chains" value="3G/3H=1-126"/>
</dbReference>
<dbReference type="PDB" id="6ND4">
    <property type="method" value="EM"/>
    <property type="resolution" value="4.30 A"/>
    <property type="chains" value="e/f=1-126"/>
</dbReference>
<dbReference type="PDB" id="6ZQA">
    <property type="method" value="EM"/>
    <property type="resolution" value="4.40 A"/>
    <property type="chains" value="CF/CG=1-126"/>
</dbReference>
<dbReference type="PDB" id="6ZQB">
    <property type="method" value="EM"/>
    <property type="resolution" value="3.90 A"/>
    <property type="chains" value="CF/CG=1-126"/>
</dbReference>
<dbReference type="PDB" id="6ZQC">
    <property type="method" value="EM"/>
    <property type="resolution" value="3.80 A"/>
    <property type="chains" value="CF/CG=1-126"/>
</dbReference>
<dbReference type="PDB" id="6ZQD">
    <property type="method" value="EM"/>
    <property type="resolution" value="3.80 A"/>
    <property type="chains" value="CF/CG=1-126"/>
</dbReference>
<dbReference type="PDB" id="6ZQE">
    <property type="method" value="EM"/>
    <property type="resolution" value="7.10 A"/>
    <property type="chains" value="CF/CG=1-126"/>
</dbReference>
<dbReference type="PDB" id="7AJT">
    <property type="method" value="EM"/>
    <property type="resolution" value="4.60 A"/>
    <property type="chains" value="CF/CG=1-126"/>
</dbReference>
<dbReference type="PDB" id="7AJU">
    <property type="method" value="EM"/>
    <property type="resolution" value="3.80 A"/>
    <property type="chains" value="CF/CG=1-126"/>
</dbReference>
<dbReference type="PDB" id="7D4I">
    <property type="method" value="EM"/>
    <property type="resolution" value="4.00 A"/>
    <property type="chains" value="3G/3H=1-126"/>
</dbReference>
<dbReference type="PDB" id="7D5S">
    <property type="method" value="EM"/>
    <property type="resolution" value="4.60 A"/>
    <property type="chains" value="3G/3H=1-126"/>
</dbReference>
<dbReference type="PDB" id="7D5T">
    <property type="method" value="EM"/>
    <property type="resolution" value="6.00 A"/>
    <property type="chains" value="3G/3H=1-126"/>
</dbReference>
<dbReference type="PDB" id="7D63">
    <property type="method" value="EM"/>
    <property type="resolution" value="12.30 A"/>
    <property type="chains" value="3G/3H=1-126"/>
</dbReference>
<dbReference type="PDB" id="7SUK">
    <property type="method" value="EM"/>
    <property type="resolution" value="3.99 A"/>
    <property type="chains" value="SE/SF=5-125"/>
</dbReference>
<dbReference type="PDBsum" id="1ZWZ"/>
<dbReference type="PDBsum" id="2ALE"/>
<dbReference type="PDBsum" id="3JCM"/>
<dbReference type="PDBsum" id="4NUT"/>
<dbReference type="PDBsum" id="5GAN"/>
<dbReference type="PDBsum" id="5GAP"/>
<dbReference type="PDBsum" id="5NRL"/>
<dbReference type="PDBsum" id="5TZS"/>
<dbReference type="PDBsum" id="5WLC"/>
<dbReference type="PDBsum" id="5WYJ"/>
<dbReference type="PDBsum" id="5WYK"/>
<dbReference type="PDBsum" id="5ZWM"/>
<dbReference type="PDBsum" id="5ZWO"/>
<dbReference type="PDBsum" id="6KE6"/>
<dbReference type="PDBsum" id="6LQP"/>
<dbReference type="PDBsum" id="6LQQ"/>
<dbReference type="PDBsum" id="6LQR"/>
<dbReference type="PDBsum" id="6LQS"/>
<dbReference type="PDBsum" id="6LQT"/>
<dbReference type="PDBsum" id="6LQU"/>
<dbReference type="PDBsum" id="6LQV"/>
<dbReference type="PDBsum" id="6ND4"/>
<dbReference type="PDBsum" id="6ZQA"/>
<dbReference type="PDBsum" id="6ZQB"/>
<dbReference type="PDBsum" id="6ZQC"/>
<dbReference type="PDBsum" id="6ZQD"/>
<dbReference type="PDBsum" id="6ZQE"/>
<dbReference type="PDBsum" id="7AJT"/>
<dbReference type="PDBsum" id="7AJU"/>
<dbReference type="PDBsum" id="7D4I"/>
<dbReference type="PDBsum" id="7D5S"/>
<dbReference type="PDBsum" id="7D5T"/>
<dbReference type="PDBsum" id="7D63"/>
<dbReference type="PDBsum" id="7SUK"/>
<dbReference type="BMRB" id="P39990"/>
<dbReference type="EMDB" id="EMD-0441"/>
<dbReference type="EMDB" id="EMD-0949"/>
<dbReference type="EMDB" id="EMD-0950"/>
<dbReference type="EMDB" id="EMD-0951"/>
<dbReference type="EMDB" id="EMD-0952"/>
<dbReference type="EMDB" id="EMD-0953"/>
<dbReference type="EMDB" id="EMD-0954"/>
<dbReference type="EMDB" id="EMD-0955"/>
<dbReference type="EMDB" id="EMD-11357"/>
<dbReference type="EMDB" id="EMD-11358"/>
<dbReference type="EMDB" id="EMD-11359"/>
<dbReference type="EMDB" id="EMD-11360"/>
<dbReference type="EMDB" id="EMD-11361"/>
<dbReference type="EMDB" id="EMD-11807"/>
<dbReference type="EMDB" id="EMD-11808"/>
<dbReference type="EMDB" id="EMD-30574"/>
<dbReference type="EMDB" id="EMD-30584"/>
<dbReference type="EMDB" id="EMD-30585"/>
<dbReference type="EMDB" id="EMD-30588"/>
<dbReference type="EMDB" id="EMD-3683"/>
<dbReference type="EMDB" id="EMD-6695"/>
<dbReference type="EMDB" id="EMD-6696"/>
<dbReference type="EMDB" id="EMD-6972"/>
<dbReference type="EMDB" id="EMD-6974"/>
<dbReference type="EMDB" id="EMD-8012"/>
<dbReference type="EMDB" id="EMD-8014"/>
<dbReference type="EMDB" id="EMD-8473"/>
<dbReference type="EMDB" id="EMD-8859"/>
<dbReference type="EMDB" id="EMD-9964"/>
<dbReference type="SMR" id="P39990"/>
<dbReference type="BioGRID" id="36703">
    <property type="interactions" value="226"/>
</dbReference>
<dbReference type="ComplexPortal" id="CPX-1604">
    <property type="entry name" value="Small ribosomal subunit processome"/>
</dbReference>
<dbReference type="ComplexPortal" id="CPX-25">
    <property type="entry name" value="U4/U6.U5 tri-small nuclear ribonucleoprotein complex"/>
</dbReference>
<dbReference type="ComplexPortal" id="CPX-31">
    <property type="entry name" value="U4 small nuclear ribonucleoprotein complex"/>
</dbReference>
<dbReference type="ComplexPortal" id="CPX-32">
    <property type="entry name" value="U4/U6 small nuclear ribonucleoprotein complex"/>
</dbReference>
<dbReference type="ComplexPortal" id="CPX-729">
    <property type="entry name" value="Box C/D snoRNP complex"/>
</dbReference>
<dbReference type="DIP" id="DIP-2870N"/>
<dbReference type="FunCoup" id="P39990">
    <property type="interactions" value="1609"/>
</dbReference>
<dbReference type="IntAct" id="P39990">
    <property type="interactions" value="34"/>
</dbReference>
<dbReference type="MINT" id="P39990"/>
<dbReference type="STRING" id="4932.YEL026W"/>
<dbReference type="iPTMnet" id="P39990"/>
<dbReference type="PaxDb" id="4932-YEL026W"/>
<dbReference type="PeptideAtlas" id="P39990"/>
<dbReference type="EnsemblFungi" id="YEL026W_mRNA">
    <property type="protein sequence ID" value="YEL026W"/>
    <property type="gene ID" value="YEL026W"/>
</dbReference>
<dbReference type="GeneID" id="856687"/>
<dbReference type="KEGG" id="sce:YEL026W"/>
<dbReference type="AGR" id="SGD:S000000752"/>
<dbReference type="SGD" id="S000000752">
    <property type="gene designation" value="SNU13"/>
</dbReference>
<dbReference type="VEuPathDB" id="FungiDB:YEL026W"/>
<dbReference type="eggNOG" id="KOG3387">
    <property type="taxonomic scope" value="Eukaryota"/>
</dbReference>
<dbReference type="GeneTree" id="ENSGT00550000074840"/>
<dbReference type="HOGENOM" id="CLU_084513_4_1_1"/>
<dbReference type="InParanoid" id="P39990"/>
<dbReference type="OMA" id="IKNQIYA"/>
<dbReference type="OrthoDB" id="1924699at2759"/>
<dbReference type="BioCyc" id="YEAST:G3O-30149-MONOMER"/>
<dbReference type="Reactome" id="R-SCE-6791226">
    <property type="pathway name" value="Major pathway of rRNA processing in the nucleolus and cytosol"/>
</dbReference>
<dbReference type="BioGRID-ORCS" id="856687">
    <property type="hits" value="2 hits in 10 CRISPR screens"/>
</dbReference>
<dbReference type="CD-CODE" id="BDAE0F88">
    <property type="entry name" value="Nucleolus"/>
</dbReference>
<dbReference type="EvolutionaryTrace" id="P39990"/>
<dbReference type="PRO" id="PR:P39990"/>
<dbReference type="Proteomes" id="UP000002311">
    <property type="component" value="Chromosome V"/>
</dbReference>
<dbReference type="RNAct" id="P39990">
    <property type="molecule type" value="protein"/>
</dbReference>
<dbReference type="GO" id="GO:0031428">
    <property type="term" value="C:box C/D methylation guide snoRNP complex"/>
    <property type="evidence" value="ECO:0000314"/>
    <property type="project" value="SGD"/>
</dbReference>
<dbReference type="GO" id="GO:0005730">
    <property type="term" value="C:nucleolus"/>
    <property type="evidence" value="ECO:0000314"/>
    <property type="project" value="SGD"/>
</dbReference>
<dbReference type="GO" id="GO:0005654">
    <property type="term" value="C:nucleoplasm"/>
    <property type="evidence" value="ECO:0000304"/>
    <property type="project" value="Reactome"/>
</dbReference>
<dbReference type="GO" id="GO:0005634">
    <property type="term" value="C:nucleus"/>
    <property type="evidence" value="ECO:0000303"/>
    <property type="project" value="ComplexPortal"/>
</dbReference>
<dbReference type="GO" id="GO:0071011">
    <property type="term" value="C:precatalytic spliceosome"/>
    <property type="evidence" value="ECO:0000318"/>
    <property type="project" value="GO_Central"/>
</dbReference>
<dbReference type="GO" id="GO:0032040">
    <property type="term" value="C:small-subunit processome"/>
    <property type="evidence" value="ECO:0000314"/>
    <property type="project" value="SGD"/>
</dbReference>
<dbReference type="GO" id="GO:0005681">
    <property type="term" value="C:spliceosomal complex"/>
    <property type="evidence" value="ECO:0000303"/>
    <property type="project" value="ComplexPortal"/>
</dbReference>
<dbReference type="GO" id="GO:0005687">
    <property type="term" value="C:U4 snRNP"/>
    <property type="evidence" value="ECO:0000303"/>
    <property type="project" value="ComplexPortal"/>
</dbReference>
<dbReference type="GO" id="GO:0071001">
    <property type="term" value="C:U4/U6 snRNP"/>
    <property type="evidence" value="ECO:0000303"/>
    <property type="project" value="ComplexPortal"/>
</dbReference>
<dbReference type="GO" id="GO:0046540">
    <property type="term" value="C:U4/U6 x U5 tri-snRNP complex"/>
    <property type="evidence" value="ECO:0000314"/>
    <property type="project" value="SGD"/>
</dbReference>
<dbReference type="GO" id="GO:0003723">
    <property type="term" value="F:RNA binding"/>
    <property type="evidence" value="ECO:0000315"/>
    <property type="project" value="SGD"/>
</dbReference>
<dbReference type="GO" id="GO:0034511">
    <property type="term" value="F:U3 snoRNA binding"/>
    <property type="evidence" value="ECO:0000314"/>
    <property type="project" value="GO_Central"/>
</dbReference>
<dbReference type="GO" id="GO:0030621">
    <property type="term" value="F:U4 snRNA binding"/>
    <property type="evidence" value="ECO:0000314"/>
    <property type="project" value="GO_Central"/>
</dbReference>
<dbReference type="GO" id="GO:0000494">
    <property type="term" value="P:box C/D sno(s)RNA 3'-end processing"/>
    <property type="evidence" value="ECO:0000314"/>
    <property type="project" value="ComplexPortal"/>
</dbReference>
<dbReference type="GO" id="GO:0030490">
    <property type="term" value="P:maturation of SSU-rRNA"/>
    <property type="evidence" value="ECO:0000318"/>
    <property type="project" value="GO_Central"/>
</dbReference>
<dbReference type="GO" id="GO:0000462">
    <property type="term" value="P:maturation of SSU-rRNA from tricistronic rRNA transcript (SSU-rRNA, 5.8S rRNA, LSU-rRNA)"/>
    <property type="evidence" value="ECO:0000315"/>
    <property type="project" value="SGD"/>
</dbReference>
<dbReference type="GO" id="GO:0000398">
    <property type="term" value="P:mRNA splicing, via spliceosome"/>
    <property type="evidence" value="ECO:0000315"/>
    <property type="project" value="SGD"/>
</dbReference>
<dbReference type="GO" id="GO:0000452">
    <property type="term" value="P:snoRNA guided rRNA 2'-O-methylation"/>
    <property type="evidence" value="ECO:0000314"/>
    <property type="project" value="ComplexPortal"/>
</dbReference>
<dbReference type="GO" id="GO:0000245">
    <property type="term" value="P:spliceosomal complex assembly"/>
    <property type="evidence" value="ECO:0000303"/>
    <property type="project" value="ComplexPortal"/>
</dbReference>
<dbReference type="CDD" id="cd21104">
    <property type="entry name" value="SNU13"/>
    <property type="match status" value="1"/>
</dbReference>
<dbReference type="FunFam" id="3.30.1330.30:FF:000002">
    <property type="entry name" value="NHP2-like protein 1 homolog"/>
    <property type="match status" value="1"/>
</dbReference>
<dbReference type="Gene3D" id="3.30.1330.30">
    <property type="match status" value="1"/>
</dbReference>
<dbReference type="InterPro" id="IPR050257">
    <property type="entry name" value="eL8/uL1-like"/>
</dbReference>
<dbReference type="InterPro" id="IPR002415">
    <property type="entry name" value="H/ACA_rnp_Nhp2-like"/>
</dbReference>
<dbReference type="InterPro" id="IPR029064">
    <property type="entry name" value="Ribosomal_eL30-like_sf"/>
</dbReference>
<dbReference type="InterPro" id="IPR004037">
    <property type="entry name" value="Ribosomal_eL8-like_CS"/>
</dbReference>
<dbReference type="InterPro" id="IPR004038">
    <property type="entry name" value="Ribosomal_eL8/eL30/eS12/Gad45"/>
</dbReference>
<dbReference type="InterPro" id="IPR018492">
    <property type="entry name" value="Ribosomal_eL8/Nhp2"/>
</dbReference>
<dbReference type="PANTHER" id="PTHR23105">
    <property type="entry name" value="RIBOSOMAL PROTEIN L7AE FAMILY MEMBER"/>
    <property type="match status" value="1"/>
</dbReference>
<dbReference type="Pfam" id="PF01248">
    <property type="entry name" value="Ribosomal_L7Ae"/>
    <property type="match status" value="1"/>
</dbReference>
<dbReference type="PRINTS" id="PR00881">
    <property type="entry name" value="L7ARS6FAMILY"/>
</dbReference>
<dbReference type="PRINTS" id="PR00883">
    <property type="entry name" value="NUCLEARHMG"/>
</dbReference>
<dbReference type="SUPFAM" id="SSF55315">
    <property type="entry name" value="L30e-like"/>
    <property type="match status" value="1"/>
</dbReference>
<dbReference type="PROSITE" id="PS01082">
    <property type="entry name" value="RIBOSOMAL_L7AE"/>
    <property type="match status" value="1"/>
</dbReference>
<keyword id="KW-0002">3D-structure</keyword>
<keyword id="KW-0507">mRNA processing</keyword>
<keyword id="KW-0508">mRNA splicing</keyword>
<keyword id="KW-0539">Nucleus</keyword>
<keyword id="KW-1185">Reference proteome</keyword>
<keyword id="KW-0687">Ribonucleoprotein</keyword>
<keyword id="KW-0690">Ribosome biogenesis</keyword>
<keyword id="KW-0694">RNA-binding</keyword>
<keyword id="KW-0698">rRNA processing</keyword>
<keyword id="KW-0747">Spliceosome</keyword>
<reference key="1">
    <citation type="journal article" date="1997" name="Nature">
        <title>The nucleotide sequence of Saccharomyces cerevisiae chromosome V.</title>
        <authorList>
            <person name="Dietrich F.S."/>
            <person name="Mulligan J.T."/>
            <person name="Hennessy K.M."/>
            <person name="Yelton M.A."/>
            <person name="Allen E."/>
            <person name="Araujo R."/>
            <person name="Aviles E."/>
            <person name="Berno A."/>
            <person name="Brennan T."/>
            <person name="Carpenter J."/>
            <person name="Chen E."/>
            <person name="Cherry J.M."/>
            <person name="Chung E."/>
            <person name="Duncan M."/>
            <person name="Guzman E."/>
            <person name="Hartzell G."/>
            <person name="Hunicke-Smith S."/>
            <person name="Hyman R.W."/>
            <person name="Kayser A."/>
            <person name="Komp C."/>
            <person name="Lashkari D."/>
            <person name="Lew H."/>
            <person name="Lin D."/>
            <person name="Mosedale D."/>
            <person name="Nakahara K."/>
            <person name="Namath A."/>
            <person name="Norgren R."/>
            <person name="Oefner P."/>
            <person name="Oh C."/>
            <person name="Petel F.X."/>
            <person name="Roberts D."/>
            <person name="Sehl P."/>
            <person name="Schramm S."/>
            <person name="Shogren T."/>
            <person name="Smith V."/>
            <person name="Taylor P."/>
            <person name="Wei Y."/>
            <person name="Botstein D."/>
            <person name="Davis R.W."/>
        </authorList>
    </citation>
    <scope>NUCLEOTIDE SEQUENCE [LARGE SCALE GENOMIC DNA]</scope>
    <source>
        <strain>ATCC 204508 / S288c</strain>
    </source>
</reference>
<reference key="2">
    <citation type="journal article" date="2014" name="G3 (Bethesda)">
        <title>The reference genome sequence of Saccharomyces cerevisiae: Then and now.</title>
        <authorList>
            <person name="Engel S.R."/>
            <person name="Dietrich F.S."/>
            <person name="Fisk D.G."/>
            <person name="Binkley G."/>
            <person name="Balakrishnan R."/>
            <person name="Costanzo M.C."/>
            <person name="Dwight S.S."/>
            <person name="Hitz B.C."/>
            <person name="Karra K."/>
            <person name="Nash R.S."/>
            <person name="Weng S."/>
            <person name="Wong E.D."/>
            <person name="Lloyd P."/>
            <person name="Skrzypek M.S."/>
            <person name="Miyasato S.R."/>
            <person name="Simison M."/>
            <person name="Cherry J.M."/>
        </authorList>
    </citation>
    <scope>GENOME REANNOTATION</scope>
    <source>
        <strain>ATCC 204508 / S288c</strain>
    </source>
</reference>
<reference key="3">
    <citation type="journal article" date="2007" name="Genome Res.">
        <title>Approaching a complete repository of sequence-verified protein-encoding clones for Saccharomyces cerevisiae.</title>
        <authorList>
            <person name="Hu Y."/>
            <person name="Rolfs A."/>
            <person name="Bhullar B."/>
            <person name="Murthy T.V.S."/>
            <person name="Zhu C."/>
            <person name="Berger M.F."/>
            <person name="Camargo A.A."/>
            <person name="Kelley F."/>
            <person name="McCarron S."/>
            <person name="Jepson D."/>
            <person name="Richardson A."/>
            <person name="Raphael J."/>
            <person name="Moreira D."/>
            <person name="Taycher E."/>
            <person name="Zuo D."/>
            <person name="Mohr S."/>
            <person name="Kane M.F."/>
            <person name="Williamson J."/>
            <person name="Simpson A.J.G."/>
            <person name="Bulyk M.L."/>
            <person name="Harlow E."/>
            <person name="Marsischky G."/>
            <person name="Kolodner R.D."/>
            <person name="LaBaer J."/>
        </authorList>
    </citation>
    <scope>NUCLEOTIDE SEQUENCE [GENOMIC DNA]</scope>
    <source>
        <strain>ATCC 204508 / S288c</strain>
    </source>
</reference>
<reference key="4">
    <citation type="journal article" date="1999" name="EMBO J.">
        <title>Identification by mass spectrometry and functional analysis of novel proteins of the yeast [U4/U6.U5] tri-snRNP.</title>
        <authorList>
            <person name="Gottschalk A."/>
            <person name="Neubauer G."/>
            <person name="Banroques J."/>
            <person name="Mann M."/>
            <person name="Luehrmann R."/>
            <person name="Fabrizio P."/>
        </authorList>
    </citation>
    <scope>SUBUNIT</scope>
    <scope>IDENTIFICATION IN THE U4/U5/U6 TRI-SNRNP COMPLEX</scope>
    <scope>IDENTIFICATION BY MASS SPECTROMETRY</scope>
</reference>
<reference key="5">
    <citation type="journal article" date="1999" name="Proc. Natl. Acad. Sci. U.S.A.">
        <title>Purification of the yeast U4/U6.U5 small nuclear ribonucleoprotein particle and identification of its proteins.</title>
        <authorList>
            <person name="Stevens S.W."/>
            <person name="Abelson J."/>
        </authorList>
    </citation>
    <scope>IDENTIFICATION IN U4/U6.U5 TRI-SNRNP COMPLEX</scope>
    <scope>IDENTIFICATION BY MASS SPECTROMETRY</scope>
</reference>
<reference key="6">
    <citation type="journal article" date="2000" name="Cell">
        <title>A common core RNP structure shared between the small nucleoar box C/D RNPs and the spliceosomal U4 snRNP.</title>
        <authorList>
            <person name="Watkins N.J."/>
            <person name="Segault V."/>
            <person name="Charpentier B."/>
            <person name="Nottrott S."/>
            <person name="Fabrizio P."/>
            <person name="Bachi A."/>
            <person name="Wilm M."/>
            <person name="Rosbash M."/>
            <person name="Branlant C."/>
            <person name="Luehrmann R."/>
        </authorList>
    </citation>
    <scope>FUNCTION</scope>
    <scope>IDENTIFICATION IN U3 SNORNP</scope>
    <scope>IDENTIFICATION BY MASS SPECTROMETRY</scope>
    <scope>RNA-BINDING</scope>
</reference>
<reference key="7">
    <citation type="journal article" date="2002" name="Mol. Cell">
        <title>Composition and functional characterization of the yeast spliceosomal penta-snRNP.</title>
        <authorList>
            <person name="Stevens S.W."/>
            <person name="Ryan D.E."/>
            <person name="Ge H.Y."/>
            <person name="Moore R.E."/>
            <person name="Young M.K."/>
            <person name="Lee T.D."/>
            <person name="Abelson J."/>
        </authorList>
    </citation>
    <scope>IDENTIFICATION IN U1.U2.U4/U6.U5 PENTA-SNRNP COMPLEX</scope>
    <scope>IDENTIFICATION BY MASS SPECTROMETRY</scope>
</reference>
<reference key="8">
    <citation type="journal article" date="2002" name="Mol. Cell. Biol.">
        <title>Purified box C/D snoRNPs are able to reproduce site-specific 2'-O-methylation of target RNA in vitro.</title>
        <authorList>
            <person name="Galardi S."/>
            <person name="Fatica A."/>
            <person name="Bachi A."/>
            <person name="Scaloni A."/>
            <person name="Presutti C."/>
            <person name="Bozzoni I."/>
        </authorList>
    </citation>
    <scope>FUNCTION</scope>
    <scope>IDENTIFICATION IN U3 SNORNP</scope>
    <scope>IDENTIFICATION BY MASS SPECTROMETRY</scope>
</reference>
<reference key="9">
    <citation type="journal article" date="2002" name="Nature">
        <title>A large nucleolar U3 ribonucleoprotein required for 18S ribosomal RNA biogenesis.</title>
        <authorList>
            <person name="Dragon F."/>
            <person name="Gallagher J.E.G."/>
            <person name="Compagnone-Post P.A."/>
            <person name="Mitchell B.M."/>
            <person name="Porwancher K.A."/>
            <person name="Wehner K.A."/>
            <person name="Wormsley S."/>
            <person name="Settlage R.E."/>
            <person name="Shabanowitz J."/>
            <person name="Osheim Y."/>
            <person name="Beyer A.L."/>
            <person name="Hunt D.F."/>
            <person name="Baserga S.J."/>
        </authorList>
    </citation>
    <scope>IDENTIFICATION IN SSU PROCESSOME BY MASS SPECTROMETRY</scope>
</reference>
<reference key="10">
    <citation type="journal article" date="2003" name="Mol. Cell">
        <title>Assigning function to yeast proteins by integration of technologies.</title>
        <authorList>
            <person name="Hazbun T.R."/>
            <person name="Malmstroem L."/>
            <person name="Anderson S."/>
            <person name="Graczyk B.J."/>
            <person name="Fox B."/>
            <person name="Riffle M."/>
            <person name="Sundin B.A."/>
            <person name="Aranda J.D."/>
            <person name="McDonald W.H."/>
            <person name="Chiu C.-H."/>
            <person name="Snydsman B.E."/>
            <person name="Bradley P."/>
            <person name="Muller E.G.D."/>
            <person name="Fields S."/>
            <person name="Baker D."/>
            <person name="Yates J.R. III"/>
            <person name="Davis T.N."/>
        </authorList>
    </citation>
    <scope>IDENTIFICATION BY MASS SPECTROMETRY</scope>
</reference>
<reference key="11">
    <citation type="journal article" date="2003" name="RNA">
        <title>A structural, phylogenetic, and functional study of 15.5-kD/Snu13 protein binding on U3 small nucleolar RNA.</title>
        <authorList>
            <person name="Marmier-Gourrier N."/>
            <person name="Clery A."/>
            <person name="Senty-Segault V."/>
            <person name="Charpentier B."/>
            <person name="Schlotter F."/>
            <person name="Leclerc F."/>
            <person name="Fournier R."/>
            <person name="Branlant C."/>
        </authorList>
    </citation>
    <scope>RNA-BINDING</scope>
</reference>
<reference key="12">
    <citation type="journal article" date="2004" name="RNA">
        <title>Analysis of Snu13p mutations reveals differential interactions with the U4 snRNA and U3 snoRNA.</title>
        <authorList>
            <person name="Dobbyn H.C."/>
            <person name="O'Keefe R.T."/>
        </authorList>
    </citation>
    <scope>FUNCTION</scope>
    <scope>MUTAGENESIS OF GLU-59; VAL-81 AND ARG-84</scope>
    <scope>RNA-BINDING</scope>
</reference>
<reference key="13">
    <citation type="journal article" date="2005" name="Biochem. Biophys. Res. Commun.">
        <title>Structural comparison of yeast snoRNP and spliceosomal protein Snu13p with its homologs.</title>
        <authorList>
            <person name="Oruganti S."/>
            <person name="Zhang Y."/>
            <person name="Li H."/>
        </authorList>
    </citation>
    <scope>X-RAY CRYSTALLOGRAPHY (1.9 ANGSTROMS)</scope>
</reference>
<gene>
    <name type="primary">SNU13</name>
    <name type="ordered locus">YEL026W</name>
</gene>
<accession>P39990</accession>
<accession>D3DLM2</accession>
<protein>
    <recommendedName>
        <fullName>13 kDa ribonucleoprotein-associated protein</fullName>
    </recommendedName>
    <alternativeName>
        <fullName>Small nuclear ribonucleoprotein-associated protein 1</fullName>
    </alternativeName>
</protein>
<evidence type="ECO:0000269" key="1">
    <source>
    </source>
</evidence>
<evidence type="ECO:0000269" key="2">
    <source>
    </source>
</evidence>
<evidence type="ECO:0000269" key="3">
    <source>
    </source>
</evidence>
<evidence type="ECO:0000269" key="4">
    <source>
    </source>
</evidence>
<evidence type="ECO:0000269" key="5">
    <source>
    </source>
</evidence>
<evidence type="ECO:0000269" key="6">
    <source>
    </source>
</evidence>
<evidence type="ECO:0000269" key="7">
    <source>
    </source>
</evidence>
<evidence type="ECO:0000305" key="8"/>
<evidence type="ECO:0007829" key="9">
    <source>
        <dbReference type="PDB" id="4NUT"/>
    </source>
</evidence>
<sequence>MSAPNPKAFPLADAALTQQILDVVQQAANLRQLKKGANEATKTLNRGISEFIIMAADCEPIEILLHLPLLCEDKNVPYVFVPSRVALGRACGVSRPVIAASITTNDASAIKTQIYAVKDKIETLLI</sequence>
<feature type="chain" id="PRO_0000136777" description="13 kDa ribonucleoprotein-associated protein">
    <location>
        <begin position="1"/>
        <end position="126"/>
    </location>
</feature>
<feature type="mutagenesis site" description="Impairs binding to U4 snRNA, but not U3 snoRNA. Causes pre-mRNA splicing and pre-rRNA processing defects." evidence="7">
    <original>E</original>
    <variation>A</variation>
    <location>
        <position position="59"/>
    </location>
</feature>
<feature type="mutagenesis site" description="Impairs binding to U4 snRNA, but not U3 snoRNA, and causes pre rRNA processing defects and an accumulation of unspliced U3 snoRNA; when associated with A-84." evidence="7">
    <original>V</original>
    <variation>L</variation>
    <location>
        <position position="81"/>
    </location>
</feature>
<feature type="mutagenesis site" description="Impairs binding to U4 snRNA, but not U3 snoRNA, and causes pre rRNA processing defects and an accumulation of unspliced U3 snoRNA; when associated with L-81." evidence="7">
    <original>R</original>
    <variation>A</variation>
    <location>
        <position position="84"/>
    </location>
</feature>
<feature type="helix" evidence="9">
    <location>
        <begin position="14"/>
        <end position="29"/>
    </location>
</feature>
<feature type="strand" evidence="9">
    <location>
        <begin position="33"/>
        <end position="36"/>
    </location>
</feature>
<feature type="helix" evidence="9">
    <location>
        <begin position="37"/>
        <end position="46"/>
    </location>
</feature>
<feature type="strand" evidence="9">
    <location>
        <begin position="49"/>
        <end position="55"/>
    </location>
</feature>
<feature type="helix" evidence="9">
    <location>
        <begin position="61"/>
        <end position="64"/>
    </location>
</feature>
<feature type="helix" evidence="9">
    <location>
        <begin position="66"/>
        <end position="74"/>
    </location>
</feature>
<feature type="strand" evidence="9">
    <location>
        <begin position="78"/>
        <end position="82"/>
    </location>
</feature>
<feature type="helix" evidence="9">
    <location>
        <begin position="84"/>
        <end position="90"/>
    </location>
</feature>
<feature type="strand" evidence="9">
    <location>
        <begin position="98"/>
        <end position="103"/>
    </location>
</feature>
<feature type="helix" evidence="9">
    <location>
        <begin position="110"/>
        <end position="124"/>
    </location>
</feature>
<name>SNU13_YEAST</name>
<organism>
    <name type="scientific">Saccharomyces cerevisiae (strain ATCC 204508 / S288c)</name>
    <name type="common">Baker's yeast</name>
    <dbReference type="NCBI Taxonomy" id="559292"/>
    <lineage>
        <taxon>Eukaryota</taxon>
        <taxon>Fungi</taxon>
        <taxon>Dikarya</taxon>
        <taxon>Ascomycota</taxon>
        <taxon>Saccharomycotina</taxon>
        <taxon>Saccharomycetes</taxon>
        <taxon>Saccharomycetales</taxon>
        <taxon>Saccharomycetaceae</taxon>
        <taxon>Saccharomyces</taxon>
    </lineage>
</organism>
<comment type="function">
    <text evidence="3 6 7">Common component of the spliceosome and rRNA processing machinery. In association with the spliceosomal U4/U6.U5 tri-snRNP particle, required for splicing of pre-mRNA. In association with box C/D snoRNPs, required for processing of pre-ribosomal RNA (rRNA) and site-specific 2'-O-methylation of substrate RNAs. Essential for the accumulation and stability of U4 snRNA, U6 snRNA, and box C/D snoRNAs.</text>
</comment>
<comment type="subunit">
    <text evidence="1 2 3 4 5 6">Binds to the C'/D and B/C motifs in U3 snoRNA. Component of the U4/U6-U5 tri-snRNP complex composed of the U4, U6 and U5 snRNAs and at least PRP3, PRP4, PRP6, PRP8, PRP18, PRP31, PRP38, SNU13, SNU23, SNU66, SNU114, SPP381, SMB1, SMD1, SMD2, SMD3, SMX2, SMX3, LSM2, LSM3, LSM4, LSM5, LSM6, LSM7, LSM8, BRR2 and DIB1. Binds to the 5'-stem-loop of U4 snRNA. Component of the ribosomal small subunit (SSU) processome composed of at least 40 protein subunits and snoRNA U3.</text>
</comment>
<comment type="interaction">
    <interactant intactId="EBI-12032">
        <id>P39990</id>
    </interactant>
    <interactant intactId="EBI-6838">
        <id>P15646</id>
        <label>NOP1</label>
    </interactant>
    <organismsDiffer>false</organismsDiffer>
    <experiments>7</experiments>
</comment>
<comment type="interaction">
    <interactant intactId="EBI-12032">
        <id>P39990</id>
    </interactant>
    <interactant intactId="EBI-17148">
        <id>Q12460</id>
        <label>NOP56</label>
    </interactant>
    <organismsDiffer>false</organismsDiffer>
    <experiments>5</experiments>
</comment>
<comment type="subcellular location">
    <subcellularLocation>
        <location>Nucleus</location>
        <location>Nucleolus</location>
    </subcellularLocation>
</comment>
<comment type="similarity">
    <text evidence="8">Belongs to the eukaryotic ribosomal protein eL8 family.</text>
</comment>
<proteinExistence type="evidence at protein level"/>